<organism>
    <name type="scientific">Xenopus borealis</name>
    <name type="common">Kenyan clawed frog</name>
    <dbReference type="NCBI Taxonomy" id="8354"/>
    <lineage>
        <taxon>Eukaryota</taxon>
        <taxon>Metazoa</taxon>
        <taxon>Chordata</taxon>
        <taxon>Craniata</taxon>
        <taxon>Vertebrata</taxon>
        <taxon>Euteleostomi</taxon>
        <taxon>Amphibia</taxon>
        <taxon>Batrachia</taxon>
        <taxon>Anura</taxon>
        <taxon>Pipoidea</taxon>
        <taxon>Pipidae</taxon>
        <taxon>Xenopodinae</taxon>
        <taxon>Xenopus</taxon>
        <taxon>Xenopus</taxon>
    </lineage>
</organism>
<keyword id="KW-0349">Heme</keyword>
<keyword id="KW-0408">Iron</keyword>
<keyword id="KW-0479">Metal-binding</keyword>
<keyword id="KW-0561">Oxygen transport</keyword>
<keyword id="KW-0813">Transport</keyword>
<gene>
    <name type="primary">hbb1</name>
</gene>
<feature type="initiator methionine" description="Removed">
    <location>
        <position position="1"/>
    </location>
</feature>
<feature type="chain" id="PRO_0000053153" description="Hemoglobin subunit beta-1">
    <location>
        <begin position="2"/>
        <end position="146"/>
    </location>
</feature>
<feature type="domain" description="Globin" evidence="1">
    <location>
        <begin position="2"/>
        <end position="146"/>
    </location>
</feature>
<feature type="binding site" description="distal binding residue">
    <location>
        <position position="63"/>
    </location>
    <ligand>
        <name>heme b</name>
        <dbReference type="ChEBI" id="CHEBI:60344"/>
    </ligand>
    <ligandPart>
        <name>Fe</name>
        <dbReference type="ChEBI" id="CHEBI:18248"/>
    </ligandPart>
</feature>
<feature type="binding site" description="proximal binding residue">
    <location>
        <position position="92"/>
    </location>
    <ligand>
        <name>heme b</name>
        <dbReference type="ChEBI" id="CHEBI:60344"/>
    </ligand>
    <ligandPart>
        <name>Fe</name>
        <dbReference type="ChEBI" id="CHEBI:18248"/>
    </ligandPart>
</feature>
<protein>
    <recommendedName>
        <fullName>Hemoglobin subunit beta-1</fullName>
    </recommendedName>
    <alternativeName>
        <fullName>Beta-1-globin</fullName>
    </alternativeName>
    <alternativeName>
        <fullName>Hemoglobin beta-1 chain</fullName>
    </alternativeName>
    <alternativeName>
        <fullName>Hemoglobin beta-major chain</fullName>
    </alternativeName>
</protein>
<reference key="1">
    <citation type="journal article" date="1986" name="J. Mol. Evol.">
        <title>Globin evolution in the genus Xenopus: comparative analysis of cDNAs coding for adult globin polypeptides of Xenopus borealis and Xenopus tropicalis.</title>
        <authorList>
            <person name="Knoechel W."/>
            <person name="Korge E."/>
            <person name="Basner A."/>
            <person name="Meyerhof W."/>
        </authorList>
    </citation>
    <scope>NUCLEOTIDE SEQUENCE [MRNA]</scope>
</reference>
<dbReference type="EMBL" id="M32456">
    <property type="protein sequence ID" value="AAA49655.1"/>
    <property type="molecule type" value="mRNA"/>
</dbReference>
<dbReference type="PIR" id="E25929">
    <property type="entry name" value="E25929"/>
</dbReference>
<dbReference type="SMR" id="P07432"/>
<dbReference type="GO" id="GO:0072562">
    <property type="term" value="C:blood microparticle"/>
    <property type="evidence" value="ECO:0007669"/>
    <property type="project" value="TreeGrafter"/>
</dbReference>
<dbReference type="GO" id="GO:0031838">
    <property type="term" value="C:haptoglobin-hemoglobin complex"/>
    <property type="evidence" value="ECO:0007669"/>
    <property type="project" value="TreeGrafter"/>
</dbReference>
<dbReference type="GO" id="GO:0005833">
    <property type="term" value="C:hemoglobin complex"/>
    <property type="evidence" value="ECO:0007669"/>
    <property type="project" value="InterPro"/>
</dbReference>
<dbReference type="GO" id="GO:0031720">
    <property type="term" value="F:haptoglobin binding"/>
    <property type="evidence" value="ECO:0007669"/>
    <property type="project" value="TreeGrafter"/>
</dbReference>
<dbReference type="GO" id="GO:0020037">
    <property type="term" value="F:heme binding"/>
    <property type="evidence" value="ECO:0007669"/>
    <property type="project" value="InterPro"/>
</dbReference>
<dbReference type="GO" id="GO:0046872">
    <property type="term" value="F:metal ion binding"/>
    <property type="evidence" value="ECO:0007669"/>
    <property type="project" value="UniProtKB-KW"/>
</dbReference>
<dbReference type="GO" id="GO:0043177">
    <property type="term" value="F:organic acid binding"/>
    <property type="evidence" value="ECO:0007669"/>
    <property type="project" value="TreeGrafter"/>
</dbReference>
<dbReference type="GO" id="GO:0019825">
    <property type="term" value="F:oxygen binding"/>
    <property type="evidence" value="ECO:0007669"/>
    <property type="project" value="InterPro"/>
</dbReference>
<dbReference type="GO" id="GO:0005344">
    <property type="term" value="F:oxygen carrier activity"/>
    <property type="evidence" value="ECO:0007669"/>
    <property type="project" value="UniProtKB-KW"/>
</dbReference>
<dbReference type="GO" id="GO:0004601">
    <property type="term" value="F:peroxidase activity"/>
    <property type="evidence" value="ECO:0007669"/>
    <property type="project" value="TreeGrafter"/>
</dbReference>
<dbReference type="GO" id="GO:0042744">
    <property type="term" value="P:hydrogen peroxide catabolic process"/>
    <property type="evidence" value="ECO:0007669"/>
    <property type="project" value="TreeGrafter"/>
</dbReference>
<dbReference type="CDD" id="cd08925">
    <property type="entry name" value="Hb-beta-like"/>
    <property type="match status" value="1"/>
</dbReference>
<dbReference type="Gene3D" id="1.10.490.10">
    <property type="entry name" value="Globins"/>
    <property type="match status" value="1"/>
</dbReference>
<dbReference type="InterPro" id="IPR000971">
    <property type="entry name" value="Globin"/>
</dbReference>
<dbReference type="InterPro" id="IPR009050">
    <property type="entry name" value="Globin-like_sf"/>
</dbReference>
<dbReference type="InterPro" id="IPR012292">
    <property type="entry name" value="Globin/Proto"/>
</dbReference>
<dbReference type="InterPro" id="IPR002337">
    <property type="entry name" value="Hemoglobin_b"/>
</dbReference>
<dbReference type="InterPro" id="IPR050056">
    <property type="entry name" value="Hemoglobin_oxygen_transport"/>
</dbReference>
<dbReference type="PANTHER" id="PTHR11442">
    <property type="entry name" value="HEMOGLOBIN FAMILY MEMBER"/>
    <property type="match status" value="1"/>
</dbReference>
<dbReference type="PANTHER" id="PTHR11442:SF100">
    <property type="entry name" value="HEMOGLOBIN SUBUNIT BETA-1"/>
    <property type="match status" value="1"/>
</dbReference>
<dbReference type="Pfam" id="PF00042">
    <property type="entry name" value="Globin"/>
    <property type="match status" value="1"/>
</dbReference>
<dbReference type="PRINTS" id="PR00814">
    <property type="entry name" value="BETAHAEM"/>
</dbReference>
<dbReference type="SUPFAM" id="SSF46458">
    <property type="entry name" value="Globin-like"/>
    <property type="match status" value="1"/>
</dbReference>
<dbReference type="PROSITE" id="PS01033">
    <property type="entry name" value="GLOBIN"/>
    <property type="match status" value="1"/>
</dbReference>
<proteinExistence type="evidence at transcript level"/>
<accession>P07432</accession>
<name>HBB1_XENBO</name>
<sequence>MGLTAHDRQLINSTWGKVCAKTIGKEALGRLLWTYPWTQRYFSSFGNLNSADAVFHNEAVAAHGEKVVTSIGEAIKHMDDIKGYYAQLSKYHSETLHVDPCNFKRFGGCLSISLARQFHEEYTPELHAAYEHLFDAIADALGKGYH</sequence>
<comment type="function">
    <text>Involved in oxygen transport from the lung to the various peripheral tissues.</text>
</comment>
<comment type="subunit">
    <text>Heterotetramer of two alpha chains and two beta chains.</text>
</comment>
<comment type="tissue specificity">
    <text>Red blood cells.</text>
</comment>
<comment type="similarity">
    <text evidence="1">Belongs to the globin family.</text>
</comment>
<evidence type="ECO:0000255" key="1">
    <source>
        <dbReference type="PROSITE-ProRule" id="PRU00238"/>
    </source>
</evidence>